<keyword id="KW-0119">Carbohydrate metabolism</keyword>
<keyword id="KW-0378">Hydrolase</keyword>
<keyword id="KW-0460">Magnesium</keyword>
<keyword id="KW-0479">Metal-binding</keyword>
<keyword id="KW-1185">Reference proteome</keyword>
<reference key="1">
    <citation type="journal article" date="2006" name="Appl. Environ. Microbiol.">
        <title>Complete genome sequence of the marine, chemolithoautotrophic, ammonia-oxidizing bacterium Nitrosococcus oceani ATCC 19707.</title>
        <authorList>
            <person name="Klotz M.G."/>
            <person name="Arp D.J."/>
            <person name="Chain P.S.G."/>
            <person name="El-Sheikh A.F."/>
            <person name="Hauser L.J."/>
            <person name="Hommes N.G."/>
            <person name="Larimer F.W."/>
            <person name="Malfatti S.A."/>
            <person name="Norton J.M."/>
            <person name="Poret-Peterson A.T."/>
            <person name="Vergez L.M."/>
            <person name="Ward B.B."/>
        </authorList>
    </citation>
    <scope>NUCLEOTIDE SEQUENCE [LARGE SCALE GENOMIC DNA]</scope>
    <source>
        <strain>ATCC 19707 / BCRC 17464 / JCM 30415 / NCIMB 11848 / C-107</strain>
    </source>
</reference>
<gene>
    <name type="ordered locus">Noc_2493</name>
</gene>
<name>GPH_NITOC</name>
<evidence type="ECO:0000255" key="1">
    <source>
        <dbReference type="HAMAP-Rule" id="MF_00495"/>
    </source>
</evidence>
<comment type="function">
    <text evidence="1">Specifically catalyzes the dephosphorylation of 2-phosphoglycolate. Is involved in the dissimilation of the intracellular 2-phosphoglycolate formed during the DNA repair of 3'-phosphoglycolate ends, a major class of DNA lesions induced by oxidative stress.</text>
</comment>
<comment type="catalytic activity">
    <reaction evidence="1">
        <text>2-phosphoglycolate + H2O = glycolate + phosphate</text>
        <dbReference type="Rhea" id="RHEA:14369"/>
        <dbReference type="ChEBI" id="CHEBI:15377"/>
        <dbReference type="ChEBI" id="CHEBI:29805"/>
        <dbReference type="ChEBI" id="CHEBI:43474"/>
        <dbReference type="ChEBI" id="CHEBI:58033"/>
        <dbReference type="EC" id="3.1.3.18"/>
    </reaction>
</comment>
<comment type="cofactor">
    <cofactor evidence="1">
        <name>Mg(2+)</name>
        <dbReference type="ChEBI" id="CHEBI:18420"/>
    </cofactor>
</comment>
<comment type="pathway">
    <text evidence="1">Organic acid metabolism; glycolate biosynthesis; glycolate from 2-phosphoglycolate: step 1/1.</text>
</comment>
<comment type="similarity">
    <text evidence="1">Belongs to the HAD-like hydrolase superfamily. CbbY/CbbZ/Gph/YieH family.</text>
</comment>
<accession>Q3J8A0</accession>
<organism>
    <name type="scientific">Nitrosococcus oceani (strain ATCC 19707 / BCRC 17464 / JCM 30415 / NCIMB 11848 / C-107)</name>
    <dbReference type="NCBI Taxonomy" id="323261"/>
    <lineage>
        <taxon>Bacteria</taxon>
        <taxon>Pseudomonadati</taxon>
        <taxon>Pseudomonadota</taxon>
        <taxon>Gammaproteobacteria</taxon>
        <taxon>Chromatiales</taxon>
        <taxon>Chromatiaceae</taxon>
        <taxon>Nitrosococcus</taxon>
    </lineage>
</organism>
<sequence length="225" mass="24862">MLKQPEMILIDVDGTLVDSVPDLTFCTDTMMERLGLPLRGETKVRQWVGNGVERLIKRALVDNMEGEPEEDLYQKAETIFLALYADNTSKRSHLYPGVNEGLAWLKSQGYRVGCVTNKAAQFTYPLLTELGIIDYFEIVISGDTLPEKKPHPAPLLHAASHFGIAPEKALMIGDSISDVKAARAANFQIVCLSYGYNHGVDIRDSQPDSVIDSLIEIKNLLSQAA</sequence>
<dbReference type="EC" id="3.1.3.18" evidence="1"/>
<dbReference type="EMBL" id="CP000127">
    <property type="protein sequence ID" value="ABA58946.1"/>
    <property type="molecule type" value="Genomic_DNA"/>
</dbReference>
<dbReference type="RefSeq" id="WP_002810595.1">
    <property type="nucleotide sequence ID" value="NC_007484.1"/>
</dbReference>
<dbReference type="SMR" id="Q3J8A0"/>
<dbReference type="FunCoup" id="Q3J8A0">
    <property type="interactions" value="456"/>
</dbReference>
<dbReference type="STRING" id="323261.Noc_2493"/>
<dbReference type="KEGG" id="noc:Noc_2493"/>
<dbReference type="eggNOG" id="COG0546">
    <property type="taxonomic scope" value="Bacteria"/>
</dbReference>
<dbReference type="HOGENOM" id="CLU_045011_19_1_6"/>
<dbReference type="InParanoid" id="Q3J8A0"/>
<dbReference type="UniPathway" id="UPA00865">
    <property type="reaction ID" value="UER00834"/>
</dbReference>
<dbReference type="Proteomes" id="UP000006838">
    <property type="component" value="Chromosome"/>
</dbReference>
<dbReference type="GO" id="GO:0005829">
    <property type="term" value="C:cytosol"/>
    <property type="evidence" value="ECO:0007669"/>
    <property type="project" value="TreeGrafter"/>
</dbReference>
<dbReference type="GO" id="GO:0046872">
    <property type="term" value="F:metal ion binding"/>
    <property type="evidence" value="ECO:0007669"/>
    <property type="project" value="UniProtKB-KW"/>
</dbReference>
<dbReference type="GO" id="GO:0008967">
    <property type="term" value="F:phosphoglycolate phosphatase activity"/>
    <property type="evidence" value="ECO:0007669"/>
    <property type="project" value="UniProtKB-UniRule"/>
</dbReference>
<dbReference type="GO" id="GO:0005975">
    <property type="term" value="P:carbohydrate metabolic process"/>
    <property type="evidence" value="ECO:0007669"/>
    <property type="project" value="InterPro"/>
</dbReference>
<dbReference type="GO" id="GO:0006281">
    <property type="term" value="P:DNA repair"/>
    <property type="evidence" value="ECO:0007669"/>
    <property type="project" value="TreeGrafter"/>
</dbReference>
<dbReference type="GO" id="GO:0046295">
    <property type="term" value="P:glycolate biosynthetic process"/>
    <property type="evidence" value="ECO:0007669"/>
    <property type="project" value="UniProtKB-UniRule"/>
</dbReference>
<dbReference type="CDD" id="cd16417">
    <property type="entry name" value="HAD_PGPase"/>
    <property type="match status" value="1"/>
</dbReference>
<dbReference type="FunFam" id="3.40.50.1000:FF:000022">
    <property type="entry name" value="Phosphoglycolate phosphatase"/>
    <property type="match status" value="1"/>
</dbReference>
<dbReference type="Gene3D" id="3.40.50.1000">
    <property type="entry name" value="HAD superfamily/HAD-like"/>
    <property type="match status" value="1"/>
</dbReference>
<dbReference type="Gene3D" id="1.10.150.240">
    <property type="entry name" value="Putative phosphatase, domain 2"/>
    <property type="match status" value="1"/>
</dbReference>
<dbReference type="HAMAP" id="MF_00495">
    <property type="entry name" value="GPH_hydrolase_bact"/>
    <property type="match status" value="1"/>
</dbReference>
<dbReference type="InterPro" id="IPR050155">
    <property type="entry name" value="HAD-like_hydrolase_sf"/>
</dbReference>
<dbReference type="InterPro" id="IPR036412">
    <property type="entry name" value="HAD-like_sf"/>
</dbReference>
<dbReference type="InterPro" id="IPR006439">
    <property type="entry name" value="HAD-SF_hydro_IA"/>
</dbReference>
<dbReference type="InterPro" id="IPR041492">
    <property type="entry name" value="HAD_2"/>
</dbReference>
<dbReference type="InterPro" id="IPR023214">
    <property type="entry name" value="HAD_sf"/>
</dbReference>
<dbReference type="InterPro" id="IPR023198">
    <property type="entry name" value="PGP-like_dom2"/>
</dbReference>
<dbReference type="InterPro" id="IPR037512">
    <property type="entry name" value="PGPase_prok"/>
</dbReference>
<dbReference type="NCBIfam" id="TIGR01549">
    <property type="entry name" value="HAD-SF-IA-v1"/>
    <property type="match status" value="1"/>
</dbReference>
<dbReference type="NCBIfam" id="TIGR01509">
    <property type="entry name" value="HAD-SF-IA-v3"/>
    <property type="match status" value="1"/>
</dbReference>
<dbReference type="NCBIfam" id="TIGR01449">
    <property type="entry name" value="PGP_bact"/>
    <property type="match status" value="1"/>
</dbReference>
<dbReference type="NCBIfam" id="NF009695">
    <property type="entry name" value="PRK13222.1-2"/>
    <property type="match status" value="1"/>
</dbReference>
<dbReference type="PANTHER" id="PTHR43434">
    <property type="entry name" value="PHOSPHOGLYCOLATE PHOSPHATASE"/>
    <property type="match status" value="1"/>
</dbReference>
<dbReference type="PANTHER" id="PTHR43434:SF1">
    <property type="entry name" value="PHOSPHOGLYCOLATE PHOSPHATASE"/>
    <property type="match status" value="1"/>
</dbReference>
<dbReference type="Pfam" id="PF13419">
    <property type="entry name" value="HAD_2"/>
    <property type="match status" value="1"/>
</dbReference>
<dbReference type="SFLD" id="SFLDG01135">
    <property type="entry name" value="C1.5.6:_HAD__Beta-PGM__Phospha"/>
    <property type="match status" value="1"/>
</dbReference>
<dbReference type="SFLD" id="SFLDS00003">
    <property type="entry name" value="Haloacid_Dehalogenase"/>
    <property type="match status" value="1"/>
</dbReference>
<dbReference type="SUPFAM" id="SSF56784">
    <property type="entry name" value="HAD-like"/>
    <property type="match status" value="1"/>
</dbReference>
<protein>
    <recommendedName>
        <fullName evidence="1">Phosphoglycolate phosphatase</fullName>
        <shortName evidence="1">PGP</shortName>
        <shortName evidence="1">PGPase</shortName>
        <ecNumber evidence="1">3.1.3.18</ecNumber>
    </recommendedName>
</protein>
<proteinExistence type="inferred from homology"/>
<feature type="chain" id="PRO_0000238162" description="Phosphoglycolate phosphatase">
    <location>
        <begin position="1"/>
        <end position="225"/>
    </location>
</feature>
<feature type="active site" description="Nucleophile" evidence="1">
    <location>
        <position position="11"/>
    </location>
</feature>
<feature type="binding site" evidence="1">
    <location>
        <position position="11"/>
    </location>
    <ligand>
        <name>Mg(2+)</name>
        <dbReference type="ChEBI" id="CHEBI:18420"/>
    </ligand>
</feature>
<feature type="binding site" evidence="1">
    <location>
        <position position="13"/>
    </location>
    <ligand>
        <name>Mg(2+)</name>
        <dbReference type="ChEBI" id="CHEBI:18420"/>
    </ligand>
</feature>
<feature type="binding site" evidence="1">
    <location>
        <position position="174"/>
    </location>
    <ligand>
        <name>Mg(2+)</name>
        <dbReference type="ChEBI" id="CHEBI:18420"/>
    </ligand>
</feature>